<accession>A8GLC2</accession>
<name>GPMI_SERP5</name>
<gene>
    <name evidence="1" type="primary">gpmI</name>
    <name type="ordered locus">Spro_4819</name>
</gene>
<feature type="chain" id="PRO_1000064000" description="2,3-bisphosphoglycerate-independent phosphoglycerate mutase">
    <location>
        <begin position="1"/>
        <end position="514"/>
    </location>
</feature>
<feature type="active site" description="Phosphoserine intermediate" evidence="1">
    <location>
        <position position="64"/>
    </location>
</feature>
<feature type="binding site" evidence="1">
    <location>
        <position position="14"/>
    </location>
    <ligand>
        <name>Mn(2+)</name>
        <dbReference type="ChEBI" id="CHEBI:29035"/>
        <label>2</label>
    </ligand>
</feature>
<feature type="binding site" evidence="1">
    <location>
        <position position="64"/>
    </location>
    <ligand>
        <name>Mn(2+)</name>
        <dbReference type="ChEBI" id="CHEBI:29035"/>
        <label>2</label>
    </ligand>
</feature>
<feature type="binding site" evidence="1">
    <location>
        <position position="125"/>
    </location>
    <ligand>
        <name>substrate</name>
    </ligand>
</feature>
<feature type="binding site" evidence="1">
    <location>
        <begin position="155"/>
        <end position="156"/>
    </location>
    <ligand>
        <name>substrate</name>
    </ligand>
</feature>
<feature type="binding site" evidence="1">
    <location>
        <position position="187"/>
    </location>
    <ligand>
        <name>substrate</name>
    </ligand>
</feature>
<feature type="binding site" evidence="1">
    <location>
        <position position="193"/>
    </location>
    <ligand>
        <name>substrate</name>
    </ligand>
</feature>
<feature type="binding site" evidence="1">
    <location>
        <begin position="263"/>
        <end position="266"/>
    </location>
    <ligand>
        <name>substrate</name>
    </ligand>
</feature>
<feature type="binding site" evidence="1">
    <location>
        <position position="337"/>
    </location>
    <ligand>
        <name>substrate</name>
    </ligand>
</feature>
<feature type="binding site" evidence="1">
    <location>
        <position position="404"/>
    </location>
    <ligand>
        <name>Mn(2+)</name>
        <dbReference type="ChEBI" id="CHEBI:29035"/>
        <label>1</label>
    </ligand>
</feature>
<feature type="binding site" evidence="1">
    <location>
        <position position="408"/>
    </location>
    <ligand>
        <name>Mn(2+)</name>
        <dbReference type="ChEBI" id="CHEBI:29035"/>
        <label>1</label>
    </ligand>
</feature>
<feature type="binding site" evidence="1">
    <location>
        <position position="445"/>
    </location>
    <ligand>
        <name>Mn(2+)</name>
        <dbReference type="ChEBI" id="CHEBI:29035"/>
        <label>2</label>
    </ligand>
</feature>
<feature type="binding site" evidence="1">
    <location>
        <position position="446"/>
    </location>
    <ligand>
        <name>Mn(2+)</name>
        <dbReference type="ChEBI" id="CHEBI:29035"/>
        <label>2</label>
    </ligand>
</feature>
<feature type="binding site" evidence="1">
    <location>
        <position position="464"/>
    </location>
    <ligand>
        <name>Mn(2+)</name>
        <dbReference type="ChEBI" id="CHEBI:29035"/>
        <label>1</label>
    </ligand>
</feature>
<proteinExistence type="inferred from homology"/>
<evidence type="ECO:0000255" key="1">
    <source>
        <dbReference type="HAMAP-Rule" id="MF_01038"/>
    </source>
</evidence>
<sequence length="514" mass="55874">MSSNKKPMVLVILDGYGHREEQQDNAILNAKTPVMDRLWQQQPHQLIAASGLDVGLPDGQMGNSEVGHVNLGAGRIVYQDLTRLDKEIKEGDFFANPTLTAAVDKAVQAGKAVHIMGLLSPGGVHSHEDHILAMIELASQRGAKAVYLHAFLDGRDTPPRSAEASLQRFSDAFAKLGTGRIASLIGRYYAMDRDNRWDRVQLAYDLLTQAKGDYVTDNAVGALQAAYERGENDEFVKPTVLQAAGEAKAELHDGDALIFMNFRADRARQIVRSFVNADFDGFPRAKIINFGDFVMLTEYAADIKAPCAYPPASLSNTFGEWLMKHDKTQLRISETEKYAHVTFFFNGGVEEPFTGEDRVLINSPKVATYDLQPEMSAAELTDKLLAAIASGKYDAIICNYPNGDMVGHTGVYDAAVKAVETLDNCIAQVVEAVKAVDGQLLITADHGNAEQMRDPATGQAHTAHTSLPVPLIYIGKPASAVNGGKLSDIAPTMLALMGMEIPQEMTGKPLFIVE</sequence>
<organism>
    <name type="scientific">Serratia proteamaculans (strain 568)</name>
    <dbReference type="NCBI Taxonomy" id="399741"/>
    <lineage>
        <taxon>Bacteria</taxon>
        <taxon>Pseudomonadati</taxon>
        <taxon>Pseudomonadota</taxon>
        <taxon>Gammaproteobacteria</taxon>
        <taxon>Enterobacterales</taxon>
        <taxon>Yersiniaceae</taxon>
        <taxon>Serratia</taxon>
    </lineage>
</organism>
<protein>
    <recommendedName>
        <fullName evidence="1">2,3-bisphosphoglycerate-independent phosphoglycerate mutase</fullName>
        <shortName evidence="1">BPG-independent PGAM</shortName>
        <shortName evidence="1">Phosphoglyceromutase</shortName>
        <shortName evidence="1">iPGM</shortName>
        <ecNumber evidence="1">5.4.2.12</ecNumber>
    </recommendedName>
</protein>
<dbReference type="EC" id="5.4.2.12" evidence="1"/>
<dbReference type="EMBL" id="CP000826">
    <property type="protein sequence ID" value="ABV43912.1"/>
    <property type="molecule type" value="Genomic_DNA"/>
</dbReference>
<dbReference type="SMR" id="A8GLC2"/>
<dbReference type="STRING" id="399741.Spro_4819"/>
<dbReference type="KEGG" id="spe:Spro_4819"/>
<dbReference type="eggNOG" id="COG0696">
    <property type="taxonomic scope" value="Bacteria"/>
</dbReference>
<dbReference type="HOGENOM" id="CLU_026099_2_0_6"/>
<dbReference type="OrthoDB" id="9800863at2"/>
<dbReference type="UniPathway" id="UPA00109">
    <property type="reaction ID" value="UER00186"/>
</dbReference>
<dbReference type="GO" id="GO:0005829">
    <property type="term" value="C:cytosol"/>
    <property type="evidence" value="ECO:0007669"/>
    <property type="project" value="TreeGrafter"/>
</dbReference>
<dbReference type="GO" id="GO:0030145">
    <property type="term" value="F:manganese ion binding"/>
    <property type="evidence" value="ECO:0007669"/>
    <property type="project" value="UniProtKB-UniRule"/>
</dbReference>
<dbReference type="GO" id="GO:0004619">
    <property type="term" value="F:phosphoglycerate mutase activity"/>
    <property type="evidence" value="ECO:0007669"/>
    <property type="project" value="UniProtKB-EC"/>
</dbReference>
<dbReference type="GO" id="GO:0006007">
    <property type="term" value="P:glucose catabolic process"/>
    <property type="evidence" value="ECO:0007669"/>
    <property type="project" value="InterPro"/>
</dbReference>
<dbReference type="GO" id="GO:0006096">
    <property type="term" value="P:glycolytic process"/>
    <property type="evidence" value="ECO:0007669"/>
    <property type="project" value="UniProtKB-UniRule"/>
</dbReference>
<dbReference type="CDD" id="cd16010">
    <property type="entry name" value="iPGM"/>
    <property type="match status" value="1"/>
</dbReference>
<dbReference type="FunFam" id="3.40.1450.10:FF:000001">
    <property type="entry name" value="2,3-bisphosphoglycerate-independent phosphoglycerate mutase"/>
    <property type="match status" value="1"/>
</dbReference>
<dbReference type="FunFam" id="3.40.720.10:FF:000001">
    <property type="entry name" value="2,3-bisphosphoglycerate-independent phosphoglycerate mutase"/>
    <property type="match status" value="1"/>
</dbReference>
<dbReference type="Gene3D" id="3.40.720.10">
    <property type="entry name" value="Alkaline Phosphatase, subunit A"/>
    <property type="match status" value="1"/>
</dbReference>
<dbReference type="Gene3D" id="3.40.1450.10">
    <property type="entry name" value="BPG-independent phosphoglycerate mutase, domain B"/>
    <property type="match status" value="1"/>
</dbReference>
<dbReference type="HAMAP" id="MF_01038">
    <property type="entry name" value="GpmI"/>
    <property type="match status" value="1"/>
</dbReference>
<dbReference type="InterPro" id="IPR017850">
    <property type="entry name" value="Alkaline_phosphatase_core_sf"/>
</dbReference>
<dbReference type="InterPro" id="IPR011258">
    <property type="entry name" value="BPG-indep_PGM_N"/>
</dbReference>
<dbReference type="InterPro" id="IPR006124">
    <property type="entry name" value="Metalloenzyme"/>
</dbReference>
<dbReference type="InterPro" id="IPR036646">
    <property type="entry name" value="PGAM_B_sf"/>
</dbReference>
<dbReference type="InterPro" id="IPR005995">
    <property type="entry name" value="Pgm_bpd_ind"/>
</dbReference>
<dbReference type="NCBIfam" id="TIGR01307">
    <property type="entry name" value="pgm_bpd_ind"/>
    <property type="match status" value="1"/>
</dbReference>
<dbReference type="NCBIfam" id="NF003897">
    <property type="entry name" value="PRK05434.1-5"/>
    <property type="match status" value="1"/>
</dbReference>
<dbReference type="PANTHER" id="PTHR31637">
    <property type="entry name" value="2,3-BISPHOSPHOGLYCERATE-INDEPENDENT PHOSPHOGLYCERATE MUTASE"/>
    <property type="match status" value="1"/>
</dbReference>
<dbReference type="PANTHER" id="PTHR31637:SF0">
    <property type="entry name" value="2,3-BISPHOSPHOGLYCERATE-INDEPENDENT PHOSPHOGLYCERATE MUTASE"/>
    <property type="match status" value="1"/>
</dbReference>
<dbReference type="Pfam" id="PF06415">
    <property type="entry name" value="iPGM_N"/>
    <property type="match status" value="1"/>
</dbReference>
<dbReference type="Pfam" id="PF01676">
    <property type="entry name" value="Metalloenzyme"/>
    <property type="match status" value="1"/>
</dbReference>
<dbReference type="PIRSF" id="PIRSF001492">
    <property type="entry name" value="IPGAM"/>
    <property type="match status" value="1"/>
</dbReference>
<dbReference type="SUPFAM" id="SSF64158">
    <property type="entry name" value="2,3-Bisphosphoglycerate-independent phosphoglycerate mutase, substrate-binding domain"/>
    <property type="match status" value="1"/>
</dbReference>
<dbReference type="SUPFAM" id="SSF53649">
    <property type="entry name" value="Alkaline phosphatase-like"/>
    <property type="match status" value="1"/>
</dbReference>
<reference key="1">
    <citation type="submission" date="2007-09" db="EMBL/GenBank/DDBJ databases">
        <title>Complete sequence of chromosome of Serratia proteamaculans 568.</title>
        <authorList>
            <consortium name="US DOE Joint Genome Institute"/>
            <person name="Copeland A."/>
            <person name="Lucas S."/>
            <person name="Lapidus A."/>
            <person name="Barry K."/>
            <person name="Glavina del Rio T."/>
            <person name="Dalin E."/>
            <person name="Tice H."/>
            <person name="Pitluck S."/>
            <person name="Chain P."/>
            <person name="Malfatti S."/>
            <person name="Shin M."/>
            <person name="Vergez L."/>
            <person name="Schmutz J."/>
            <person name="Larimer F."/>
            <person name="Land M."/>
            <person name="Hauser L."/>
            <person name="Kyrpides N."/>
            <person name="Kim E."/>
            <person name="Taghavi S."/>
            <person name="Newman L."/>
            <person name="Vangronsveld J."/>
            <person name="van der Lelie D."/>
            <person name="Richardson P."/>
        </authorList>
    </citation>
    <scope>NUCLEOTIDE SEQUENCE [LARGE SCALE GENOMIC DNA]</scope>
    <source>
        <strain>568</strain>
    </source>
</reference>
<comment type="function">
    <text evidence="1">Catalyzes the interconversion of 2-phosphoglycerate and 3-phosphoglycerate.</text>
</comment>
<comment type="catalytic activity">
    <reaction evidence="1">
        <text>(2R)-2-phosphoglycerate = (2R)-3-phosphoglycerate</text>
        <dbReference type="Rhea" id="RHEA:15901"/>
        <dbReference type="ChEBI" id="CHEBI:58272"/>
        <dbReference type="ChEBI" id="CHEBI:58289"/>
        <dbReference type="EC" id="5.4.2.12"/>
    </reaction>
</comment>
<comment type="cofactor">
    <cofactor evidence="1">
        <name>Mn(2+)</name>
        <dbReference type="ChEBI" id="CHEBI:29035"/>
    </cofactor>
    <text evidence="1">Binds 2 manganese ions per subunit.</text>
</comment>
<comment type="pathway">
    <text evidence="1">Carbohydrate degradation; glycolysis; pyruvate from D-glyceraldehyde 3-phosphate: step 3/5.</text>
</comment>
<comment type="subunit">
    <text evidence="1">Monomer.</text>
</comment>
<comment type="similarity">
    <text evidence="1">Belongs to the BPG-independent phosphoglycerate mutase family.</text>
</comment>
<keyword id="KW-0324">Glycolysis</keyword>
<keyword id="KW-0413">Isomerase</keyword>
<keyword id="KW-0464">Manganese</keyword>
<keyword id="KW-0479">Metal-binding</keyword>